<name>CARB_BUCAI</name>
<accession>P57244</accession>
<comment type="function">
    <text evidence="2">Large subunit of the glutamine-dependent carbamoyl phosphate synthetase (CPSase). CPSase catalyzes the formation of carbamoyl phosphate from the ammonia moiety of glutamine, carbonate, and phosphate donated by ATP, constituting the first step of 2 biosynthetic pathways, one leading to arginine and/or urea and the other to pyrimidine nucleotides. The large subunit (synthetase) binds the substrates ammonia (free or transferred from glutamine from the small subunit), hydrogencarbonate and ATP and carries out an ATP-coupled ligase reaction, activating hydrogencarbonate by forming carboxy phosphate which reacts with ammonia to form carbamoyl phosphate.</text>
</comment>
<comment type="catalytic activity">
    <reaction evidence="2">
        <text>hydrogencarbonate + L-glutamine + 2 ATP + H2O = carbamoyl phosphate + L-glutamate + 2 ADP + phosphate + 2 H(+)</text>
        <dbReference type="Rhea" id="RHEA:18633"/>
        <dbReference type="ChEBI" id="CHEBI:15377"/>
        <dbReference type="ChEBI" id="CHEBI:15378"/>
        <dbReference type="ChEBI" id="CHEBI:17544"/>
        <dbReference type="ChEBI" id="CHEBI:29985"/>
        <dbReference type="ChEBI" id="CHEBI:30616"/>
        <dbReference type="ChEBI" id="CHEBI:43474"/>
        <dbReference type="ChEBI" id="CHEBI:58228"/>
        <dbReference type="ChEBI" id="CHEBI:58359"/>
        <dbReference type="ChEBI" id="CHEBI:456216"/>
        <dbReference type="EC" id="6.3.5.5"/>
    </reaction>
</comment>
<comment type="catalytic activity">
    <molecule>Carbamoyl phosphate synthase large chain</molecule>
    <reaction evidence="2">
        <text>hydrogencarbonate + NH4(+) + 2 ATP = carbamoyl phosphate + 2 ADP + phosphate + 2 H(+)</text>
        <dbReference type="Rhea" id="RHEA:18029"/>
        <dbReference type="ChEBI" id="CHEBI:15378"/>
        <dbReference type="ChEBI" id="CHEBI:17544"/>
        <dbReference type="ChEBI" id="CHEBI:28938"/>
        <dbReference type="ChEBI" id="CHEBI:30616"/>
        <dbReference type="ChEBI" id="CHEBI:43474"/>
        <dbReference type="ChEBI" id="CHEBI:58228"/>
        <dbReference type="ChEBI" id="CHEBI:456216"/>
        <dbReference type="EC" id="6.3.4.16"/>
    </reaction>
</comment>
<comment type="cofactor">
    <cofactor evidence="2">
        <name>Mg(2+)</name>
        <dbReference type="ChEBI" id="CHEBI:18420"/>
    </cofactor>
    <cofactor evidence="2">
        <name>Mn(2+)</name>
        <dbReference type="ChEBI" id="CHEBI:29035"/>
    </cofactor>
    <text evidence="2">Binds 4 Mg(2+) or Mn(2+) ions per subunit.</text>
</comment>
<comment type="pathway">
    <text evidence="2">Amino-acid biosynthesis; L-arginine biosynthesis; carbamoyl phosphate from bicarbonate: step 1/1.</text>
</comment>
<comment type="pathway">
    <text evidence="2">Pyrimidine metabolism; UMP biosynthesis via de novo pathway; (S)-dihydroorotate from bicarbonate: step 1/3.</text>
</comment>
<comment type="subunit">
    <text evidence="2">Composed of two chains; the small (or glutamine) chain promotes the hydrolysis of glutamine to ammonia, which is used by the large (or ammonia) chain to synthesize carbamoyl phosphate. Tetramer of heterodimers (alpha,beta)4.</text>
</comment>
<comment type="domain">
    <text evidence="2">The large subunit is composed of 2 ATP-grasp domains that are involved in binding the 2 ATP molecules needed for carbamoyl phosphate synthesis. The N-terminal ATP-grasp domain (referred to as the carboxyphosphate synthetic component) catalyzes the ATP-dependent phosphorylation of hydrogencarbonate to carboxyphosphate and the subsequent nucleophilic attack by ammonia to form a carbamate intermediate. The C-terminal ATP-grasp domain (referred to as the carbamoyl phosphate synthetic component) then catalyzes the phosphorylation of carbamate with the second ATP to form the end product carbamoyl phosphate. The reactive and unstable enzyme intermediates are sequentially channeled from one active site to the next through the interior of the protein over a distance of at least 96 A.</text>
</comment>
<comment type="similarity">
    <text evidence="2 3">Belongs to the CarB family.</text>
</comment>
<keyword id="KW-0028">Amino-acid biosynthesis</keyword>
<keyword id="KW-0055">Arginine biosynthesis</keyword>
<keyword id="KW-0067">ATP-binding</keyword>
<keyword id="KW-0436">Ligase</keyword>
<keyword id="KW-0460">Magnesium</keyword>
<keyword id="KW-0464">Manganese</keyword>
<keyword id="KW-0479">Metal-binding</keyword>
<keyword id="KW-0547">Nucleotide-binding</keyword>
<keyword id="KW-0665">Pyrimidine biosynthesis</keyword>
<keyword id="KW-1185">Reference proteome</keyword>
<keyword id="KW-0677">Repeat</keyword>
<reference key="1">
    <citation type="journal article" date="2000" name="Nature">
        <title>Genome sequence of the endocellular bacterial symbiont of aphids Buchnera sp. APS.</title>
        <authorList>
            <person name="Shigenobu S."/>
            <person name="Watanabe H."/>
            <person name="Hattori M."/>
            <person name="Sakaki Y."/>
            <person name="Ishikawa H."/>
        </authorList>
    </citation>
    <scope>NUCLEOTIDE SEQUENCE [LARGE SCALE GENOMIC DNA]</scope>
    <source>
        <strain>APS</strain>
    </source>
</reference>
<evidence type="ECO:0000250" key="1"/>
<evidence type="ECO:0000255" key="2">
    <source>
        <dbReference type="HAMAP-Rule" id="MF_01210"/>
    </source>
</evidence>
<evidence type="ECO:0000305" key="3"/>
<organism>
    <name type="scientific">Buchnera aphidicola subsp. Acyrthosiphon pisum (strain APS)</name>
    <name type="common">Acyrthosiphon pisum symbiotic bacterium</name>
    <dbReference type="NCBI Taxonomy" id="107806"/>
    <lineage>
        <taxon>Bacteria</taxon>
        <taxon>Pseudomonadati</taxon>
        <taxon>Pseudomonadota</taxon>
        <taxon>Gammaproteobacteria</taxon>
        <taxon>Enterobacterales</taxon>
        <taxon>Erwiniaceae</taxon>
        <taxon>Buchnera</taxon>
    </lineage>
</organism>
<sequence length="1079" mass="120516">MPKSTDIKSILILGAGPIVIGQACEFDYSGTQACKALKEEGYRIILLNSNPATIMTDPDMADATYVEPIHWEIVEKIIQKEKPDALLPTMGGQTALNCALELDHKGILKKYGVQIIGATVDAIKKAENRKLFEHSMKKLNLETAKCGIAHNIQEAFLVLNNVGFPCIIRPSFTMGGHGGGIAYNHEEFEKICERGLELSPSTELLIDESLIGWKEYEMEVVRDKNDNCIIVCSIENLDPMGIHTGDSITVAPAQTLTDKEYQVMRNASMSILREIGVETGGSNVQFAINPKNGRMIVIEMNPRVSRSSALASKATGFPIAKIAAKLAIGYTLDELANDITGTNTTASFEPSIDYIVTKIPRFNFEKFPGCDDRLTTQMKSVGEVMAIGRTFQESIQKAIRGLEVGASGFDSKISSRDSEYLIKIRRELKDAGSERIWYIGDAFRYGMSINDVFDLTSIDPWFLVQIKEIILLEKKIIKNGFIGLKYDFFYFLKRKGFSDQRIAILTNKNESEIRQLRYKLNLHPVYKRIDTCSAEFSTETAYMYSTWEDECESHPSKNNKKIIILGGGPNRIGQGIEFDYCCVHAAQALREDGFEAIMVNCNPETVSTDYDISDRLYFEPITLENVLEIVRIEKPKGVIIQYGGQTPLKLAHEFEKEGVPIIGTSPDSIDTAENRYRFQKTVNKLRLQQPLNATVLTLDEAYKKADIIGYPIMVRPSYVLGGRAMEIVYEPYGLENYFKTTLKKNNTTPILLDQYLDYATEVDVDAICDGETVLIGGIMEHIEQAGVHSGDSACSLPAYTLTSKVQNEIRRQVKKLAFELSVKGLMNIQFAIKNNKIYIIEVNPRAARTVPFVSKAIGLALAKISVRVMCGKTLLEQGFIKEIIPPYFSVKEAVLPFDKFQGVDPILGPEMRSTGEVMGIGKNFSEAFSKSMLGAHTNMKKSGRVLLSVRNNDKNNIINLAVKLKKLGFKIDATKGTSVALKKSGISSRLVNKVHEGRPHIQDRLKNGEYSYIVNTTSCYQGIKDSKLICRSALQYKVHYDTTVNGAFATVMALNENPIKNIETLQKIHKKIQLFYTKK</sequence>
<proteinExistence type="inferred from homology"/>
<feature type="initiator methionine" description="Removed" evidence="1">
    <location>
        <position position="1"/>
    </location>
</feature>
<feature type="chain" id="PRO_0000144995" description="Carbamoyl phosphate synthase large chain">
    <location>
        <begin position="2"/>
        <end position="1079"/>
    </location>
</feature>
<feature type="domain" description="ATP-grasp 1" evidence="2">
    <location>
        <begin position="133"/>
        <end position="328"/>
    </location>
</feature>
<feature type="domain" description="ATP-grasp 2" evidence="2">
    <location>
        <begin position="679"/>
        <end position="870"/>
    </location>
</feature>
<feature type="domain" description="MGS-like" evidence="2">
    <location>
        <begin position="937"/>
        <end position="1079"/>
    </location>
</feature>
<feature type="region of interest" description="Carboxyphosphate synthetic domain" evidence="2">
    <location>
        <begin position="2"/>
        <end position="403"/>
    </location>
</feature>
<feature type="region of interest" description="Oligomerization domain" evidence="2">
    <location>
        <begin position="404"/>
        <end position="553"/>
    </location>
</feature>
<feature type="region of interest" description="Carbamoyl phosphate synthetic domain" evidence="2">
    <location>
        <begin position="554"/>
        <end position="936"/>
    </location>
</feature>
<feature type="region of interest" description="Allosteric domain" evidence="2">
    <location>
        <begin position="937"/>
        <end position="1079"/>
    </location>
</feature>
<feature type="binding site" evidence="2">
    <location>
        <position position="129"/>
    </location>
    <ligand>
        <name>ATP</name>
        <dbReference type="ChEBI" id="CHEBI:30616"/>
        <label>1</label>
    </ligand>
</feature>
<feature type="binding site" evidence="2">
    <location>
        <position position="169"/>
    </location>
    <ligand>
        <name>ATP</name>
        <dbReference type="ChEBI" id="CHEBI:30616"/>
        <label>1</label>
    </ligand>
</feature>
<feature type="binding site" evidence="2">
    <location>
        <position position="175"/>
    </location>
    <ligand>
        <name>ATP</name>
        <dbReference type="ChEBI" id="CHEBI:30616"/>
        <label>1</label>
    </ligand>
</feature>
<feature type="binding site" evidence="2">
    <location>
        <position position="176"/>
    </location>
    <ligand>
        <name>ATP</name>
        <dbReference type="ChEBI" id="CHEBI:30616"/>
        <label>1</label>
    </ligand>
</feature>
<feature type="binding site" evidence="2">
    <location>
        <position position="208"/>
    </location>
    <ligand>
        <name>ATP</name>
        <dbReference type="ChEBI" id="CHEBI:30616"/>
        <label>1</label>
    </ligand>
</feature>
<feature type="binding site" evidence="2">
    <location>
        <position position="210"/>
    </location>
    <ligand>
        <name>ATP</name>
        <dbReference type="ChEBI" id="CHEBI:30616"/>
        <label>1</label>
    </ligand>
</feature>
<feature type="binding site" evidence="2">
    <location>
        <position position="215"/>
    </location>
    <ligand>
        <name>ATP</name>
        <dbReference type="ChEBI" id="CHEBI:30616"/>
        <label>1</label>
    </ligand>
</feature>
<feature type="binding site" evidence="2">
    <location>
        <position position="241"/>
    </location>
    <ligand>
        <name>ATP</name>
        <dbReference type="ChEBI" id="CHEBI:30616"/>
        <label>1</label>
    </ligand>
</feature>
<feature type="binding site" evidence="2">
    <location>
        <position position="242"/>
    </location>
    <ligand>
        <name>ATP</name>
        <dbReference type="ChEBI" id="CHEBI:30616"/>
        <label>1</label>
    </ligand>
</feature>
<feature type="binding site" evidence="2">
    <location>
        <position position="243"/>
    </location>
    <ligand>
        <name>ATP</name>
        <dbReference type="ChEBI" id="CHEBI:30616"/>
        <label>1</label>
    </ligand>
</feature>
<feature type="binding site" evidence="2">
    <location>
        <position position="285"/>
    </location>
    <ligand>
        <name>ATP</name>
        <dbReference type="ChEBI" id="CHEBI:30616"/>
        <label>1</label>
    </ligand>
</feature>
<feature type="binding site" evidence="2">
    <location>
        <position position="285"/>
    </location>
    <ligand>
        <name>Mg(2+)</name>
        <dbReference type="ChEBI" id="CHEBI:18420"/>
        <label>1</label>
    </ligand>
</feature>
<feature type="binding site" evidence="2">
    <location>
        <position position="285"/>
    </location>
    <ligand>
        <name>Mn(2+)</name>
        <dbReference type="ChEBI" id="CHEBI:29035"/>
        <label>1</label>
    </ligand>
</feature>
<feature type="binding site" evidence="2">
    <location>
        <position position="299"/>
    </location>
    <ligand>
        <name>ATP</name>
        <dbReference type="ChEBI" id="CHEBI:30616"/>
        <label>1</label>
    </ligand>
</feature>
<feature type="binding site" evidence="2">
    <location>
        <position position="299"/>
    </location>
    <ligand>
        <name>Mg(2+)</name>
        <dbReference type="ChEBI" id="CHEBI:18420"/>
        <label>1</label>
    </ligand>
</feature>
<feature type="binding site" evidence="2">
    <location>
        <position position="299"/>
    </location>
    <ligand>
        <name>Mg(2+)</name>
        <dbReference type="ChEBI" id="CHEBI:18420"/>
        <label>2</label>
    </ligand>
</feature>
<feature type="binding site" evidence="2">
    <location>
        <position position="299"/>
    </location>
    <ligand>
        <name>Mn(2+)</name>
        <dbReference type="ChEBI" id="CHEBI:29035"/>
        <label>1</label>
    </ligand>
</feature>
<feature type="binding site" evidence="2">
    <location>
        <position position="299"/>
    </location>
    <ligand>
        <name>Mn(2+)</name>
        <dbReference type="ChEBI" id="CHEBI:29035"/>
        <label>2</label>
    </ligand>
</feature>
<feature type="binding site" evidence="2">
    <location>
        <position position="301"/>
    </location>
    <ligand>
        <name>Mg(2+)</name>
        <dbReference type="ChEBI" id="CHEBI:18420"/>
        <label>2</label>
    </ligand>
</feature>
<feature type="binding site" evidence="2">
    <location>
        <position position="301"/>
    </location>
    <ligand>
        <name>Mn(2+)</name>
        <dbReference type="ChEBI" id="CHEBI:29035"/>
        <label>2</label>
    </ligand>
</feature>
<feature type="binding site" evidence="2">
    <location>
        <position position="715"/>
    </location>
    <ligand>
        <name>ATP</name>
        <dbReference type="ChEBI" id="CHEBI:30616"/>
        <label>2</label>
    </ligand>
</feature>
<feature type="binding site" evidence="2">
    <location>
        <position position="754"/>
    </location>
    <ligand>
        <name>ATP</name>
        <dbReference type="ChEBI" id="CHEBI:30616"/>
        <label>2</label>
    </ligand>
</feature>
<feature type="binding site" evidence="2">
    <location>
        <position position="756"/>
    </location>
    <ligand>
        <name>ATP</name>
        <dbReference type="ChEBI" id="CHEBI:30616"/>
        <label>2</label>
    </ligand>
</feature>
<feature type="binding site" evidence="2">
    <location>
        <position position="761"/>
    </location>
    <ligand>
        <name>ATP</name>
        <dbReference type="ChEBI" id="CHEBI:30616"/>
        <label>2</label>
    </ligand>
</feature>
<feature type="binding site" evidence="2">
    <location>
        <position position="786"/>
    </location>
    <ligand>
        <name>ATP</name>
        <dbReference type="ChEBI" id="CHEBI:30616"/>
        <label>2</label>
    </ligand>
</feature>
<feature type="binding site" evidence="2">
    <location>
        <position position="787"/>
    </location>
    <ligand>
        <name>ATP</name>
        <dbReference type="ChEBI" id="CHEBI:30616"/>
        <label>2</label>
    </ligand>
</feature>
<feature type="binding site" evidence="2">
    <location>
        <position position="788"/>
    </location>
    <ligand>
        <name>ATP</name>
        <dbReference type="ChEBI" id="CHEBI:30616"/>
        <label>2</label>
    </ligand>
</feature>
<feature type="binding site" evidence="2">
    <location>
        <position position="789"/>
    </location>
    <ligand>
        <name>ATP</name>
        <dbReference type="ChEBI" id="CHEBI:30616"/>
        <label>2</label>
    </ligand>
</feature>
<feature type="binding site" evidence="2">
    <location>
        <position position="829"/>
    </location>
    <ligand>
        <name>ATP</name>
        <dbReference type="ChEBI" id="CHEBI:30616"/>
        <label>2</label>
    </ligand>
</feature>
<feature type="binding site" evidence="2">
    <location>
        <position position="829"/>
    </location>
    <ligand>
        <name>Mg(2+)</name>
        <dbReference type="ChEBI" id="CHEBI:18420"/>
        <label>3</label>
    </ligand>
</feature>
<feature type="binding site" evidence="2">
    <location>
        <position position="829"/>
    </location>
    <ligand>
        <name>Mn(2+)</name>
        <dbReference type="ChEBI" id="CHEBI:29035"/>
        <label>3</label>
    </ligand>
</feature>
<feature type="binding site" evidence="2">
    <location>
        <position position="841"/>
    </location>
    <ligand>
        <name>ATP</name>
        <dbReference type="ChEBI" id="CHEBI:30616"/>
        <label>2</label>
    </ligand>
</feature>
<feature type="binding site" evidence="2">
    <location>
        <position position="841"/>
    </location>
    <ligand>
        <name>Mg(2+)</name>
        <dbReference type="ChEBI" id="CHEBI:18420"/>
        <label>3</label>
    </ligand>
</feature>
<feature type="binding site" evidence="2">
    <location>
        <position position="841"/>
    </location>
    <ligand>
        <name>Mg(2+)</name>
        <dbReference type="ChEBI" id="CHEBI:18420"/>
        <label>4</label>
    </ligand>
</feature>
<feature type="binding site" evidence="2">
    <location>
        <position position="841"/>
    </location>
    <ligand>
        <name>Mn(2+)</name>
        <dbReference type="ChEBI" id="CHEBI:29035"/>
        <label>3</label>
    </ligand>
</feature>
<feature type="binding site" evidence="2">
    <location>
        <position position="841"/>
    </location>
    <ligand>
        <name>Mn(2+)</name>
        <dbReference type="ChEBI" id="CHEBI:29035"/>
        <label>4</label>
    </ligand>
</feature>
<feature type="binding site" evidence="2">
    <location>
        <position position="843"/>
    </location>
    <ligand>
        <name>Mg(2+)</name>
        <dbReference type="ChEBI" id="CHEBI:18420"/>
        <label>4</label>
    </ligand>
</feature>
<feature type="binding site" evidence="2">
    <location>
        <position position="843"/>
    </location>
    <ligand>
        <name>Mn(2+)</name>
        <dbReference type="ChEBI" id="CHEBI:29035"/>
        <label>4</label>
    </ligand>
</feature>
<gene>
    <name evidence="2" type="primary">carB</name>
    <name type="ordered locus">BU144</name>
</gene>
<protein>
    <recommendedName>
        <fullName evidence="2">Carbamoyl phosphate synthase large chain</fullName>
        <ecNumber evidence="2">6.3.4.16</ecNumber>
        <ecNumber evidence="2">6.3.5.5</ecNumber>
    </recommendedName>
    <alternativeName>
        <fullName evidence="2">Carbamoyl phosphate synthetase ammonia chain</fullName>
    </alternativeName>
</protein>
<dbReference type="EC" id="6.3.4.16" evidence="2"/>
<dbReference type="EC" id="6.3.5.5" evidence="2"/>
<dbReference type="EMBL" id="BA000003">
    <property type="protein sequence ID" value="BAB12862.1"/>
    <property type="molecule type" value="Genomic_DNA"/>
</dbReference>
<dbReference type="RefSeq" id="NP_239976.1">
    <property type="nucleotide sequence ID" value="NC_002528.1"/>
</dbReference>
<dbReference type="RefSeq" id="WP_010895970.1">
    <property type="nucleotide sequence ID" value="NC_002528.1"/>
</dbReference>
<dbReference type="SMR" id="P57244"/>
<dbReference type="STRING" id="563178.BUAP5A_142"/>
<dbReference type="EnsemblBacteria" id="BAB12862">
    <property type="protein sequence ID" value="BAB12862"/>
    <property type="gene ID" value="BAB12862"/>
</dbReference>
<dbReference type="KEGG" id="buc:BU144"/>
<dbReference type="PATRIC" id="fig|107806.10.peg.153"/>
<dbReference type="eggNOG" id="COG0458">
    <property type="taxonomic scope" value="Bacteria"/>
</dbReference>
<dbReference type="HOGENOM" id="CLU_000513_1_3_6"/>
<dbReference type="UniPathway" id="UPA00068">
    <property type="reaction ID" value="UER00171"/>
</dbReference>
<dbReference type="UniPathway" id="UPA00070">
    <property type="reaction ID" value="UER00115"/>
</dbReference>
<dbReference type="Proteomes" id="UP000001806">
    <property type="component" value="Chromosome"/>
</dbReference>
<dbReference type="GO" id="GO:0005737">
    <property type="term" value="C:cytoplasm"/>
    <property type="evidence" value="ECO:0007669"/>
    <property type="project" value="TreeGrafter"/>
</dbReference>
<dbReference type="GO" id="GO:0005524">
    <property type="term" value="F:ATP binding"/>
    <property type="evidence" value="ECO:0007669"/>
    <property type="project" value="UniProtKB-UniRule"/>
</dbReference>
<dbReference type="GO" id="GO:0004087">
    <property type="term" value="F:carbamoyl-phosphate synthase (ammonia) activity"/>
    <property type="evidence" value="ECO:0007669"/>
    <property type="project" value="RHEA"/>
</dbReference>
<dbReference type="GO" id="GO:0004088">
    <property type="term" value="F:carbamoyl-phosphate synthase (glutamine-hydrolyzing) activity"/>
    <property type="evidence" value="ECO:0007669"/>
    <property type="project" value="UniProtKB-UniRule"/>
</dbReference>
<dbReference type="GO" id="GO:0046872">
    <property type="term" value="F:metal ion binding"/>
    <property type="evidence" value="ECO:0007669"/>
    <property type="project" value="UniProtKB-KW"/>
</dbReference>
<dbReference type="GO" id="GO:0044205">
    <property type="term" value="P:'de novo' UMP biosynthetic process"/>
    <property type="evidence" value="ECO:0007669"/>
    <property type="project" value="UniProtKB-UniRule"/>
</dbReference>
<dbReference type="GO" id="GO:0006541">
    <property type="term" value="P:glutamine metabolic process"/>
    <property type="evidence" value="ECO:0007669"/>
    <property type="project" value="TreeGrafter"/>
</dbReference>
<dbReference type="GO" id="GO:0006526">
    <property type="term" value="P:L-arginine biosynthetic process"/>
    <property type="evidence" value="ECO:0007669"/>
    <property type="project" value="UniProtKB-UniRule"/>
</dbReference>
<dbReference type="CDD" id="cd01424">
    <property type="entry name" value="MGS_CPS_II"/>
    <property type="match status" value="1"/>
</dbReference>
<dbReference type="FunFam" id="1.10.1030.10:FF:000002">
    <property type="entry name" value="Carbamoyl-phosphate synthase large chain"/>
    <property type="match status" value="1"/>
</dbReference>
<dbReference type="FunFam" id="3.30.470.20:FF:000007">
    <property type="entry name" value="Carbamoyl-phosphate synthase large chain"/>
    <property type="match status" value="1"/>
</dbReference>
<dbReference type="FunFam" id="3.30.470.20:FF:000013">
    <property type="entry name" value="Carbamoyl-phosphate synthase large chain"/>
    <property type="match status" value="1"/>
</dbReference>
<dbReference type="FunFam" id="3.40.50.20:FF:000001">
    <property type="entry name" value="Carbamoyl-phosphate synthase large chain"/>
    <property type="match status" value="1"/>
</dbReference>
<dbReference type="FunFam" id="3.40.50.20:FF:000003">
    <property type="entry name" value="Carbamoyl-phosphate synthase large chain"/>
    <property type="match status" value="1"/>
</dbReference>
<dbReference type="Gene3D" id="3.40.50.20">
    <property type="match status" value="2"/>
</dbReference>
<dbReference type="Gene3D" id="3.30.470.20">
    <property type="entry name" value="ATP-grasp fold, B domain"/>
    <property type="match status" value="2"/>
</dbReference>
<dbReference type="Gene3D" id="1.10.1030.10">
    <property type="entry name" value="Carbamoyl-phosphate synthetase, large subunit oligomerisation domain"/>
    <property type="match status" value="1"/>
</dbReference>
<dbReference type="Gene3D" id="3.40.50.1380">
    <property type="entry name" value="Methylglyoxal synthase-like domain"/>
    <property type="match status" value="1"/>
</dbReference>
<dbReference type="HAMAP" id="MF_01210_B">
    <property type="entry name" value="CPSase_L_chain_B"/>
    <property type="match status" value="1"/>
</dbReference>
<dbReference type="InterPro" id="IPR011761">
    <property type="entry name" value="ATP-grasp"/>
</dbReference>
<dbReference type="InterPro" id="IPR006275">
    <property type="entry name" value="CarbamoylP_synth_lsu"/>
</dbReference>
<dbReference type="InterPro" id="IPR005480">
    <property type="entry name" value="CarbamoylP_synth_lsu_oligo"/>
</dbReference>
<dbReference type="InterPro" id="IPR036897">
    <property type="entry name" value="CarbamoylP_synth_lsu_oligo_sf"/>
</dbReference>
<dbReference type="InterPro" id="IPR005479">
    <property type="entry name" value="CbamoylP_synth_lsu-like_ATP-bd"/>
</dbReference>
<dbReference type="InterPro" id="IPR005483">
    <property type="entry name" value="CbamoylP_synth_lsu_CPSase_dom"/>
</dbReference>
<dbReference type="InterPro" id="IPR011607">
    <property type="entry name" value="MGS-like_dom"/>
</dbReference>
<dbReference type="InterPro" id="IPR036914">
    <property type="entry name" value="MGS-like_dom_sf"/>
</dbReference>
<dbReference type="InterPro" id="IPR033937">
    <property type="entry name" value="MGS_CPS_CarB"/>
</dbReference>
<dbReference type="InterPro" id="IPR016185">
    <property type="entry name" value="PreATP-grasp_dom_sf"/>
</dbReference>
<dbReference type="NCBIfam" id="TIGR01369">
    <property type="entry name" value="CPSaseII_lrg"/>
    <property type="match status" value="1"/>
</dbReference>
<dbReference type="NCBIfam" id="NF003671">
    <property type="entry name" value="PRK05294.1"/>
    <property type="match status" value="1"/>
</dbReference>
<dbReference type="NCBIfam" id="NF009455">
    <property type="entry name" value="PRK12815.1"/>
    <property type="match status" value="1"/>
</dbReference>
<dbReference type="PANTHER" id="PTHR11405:SF53">
    <property type="entry name" value="CARBAMOYL-PHOSPHATE SYNTHASE [AMMONIA], MITOCHONDRIAL"/>
    <property type="match status" value="1"/>
</dbReference>
<dbReference type="PANTHER" id="PTHR11405">
    <property type="entry name" value="CARBAMOYLTRANSFERASE FAMILY MEMBER"/>
    <property type="match status" value="1"/>
</dbReference>
<dbReference type="Pfam" id="PF02786">
    <property type="entry name" value="CPSase_L_D2"/>
    <property type="match status" value="2"/>
</dbReference>
<dbReference type="Pfam" id="PF02787">
    <property type="entry name" value="CPSase_L_D3"/>
    <property type="match status" value="1"/>
</dbReference>
<dbReference type="Pfam" id="PF02142">
    <property type="entry name" value="MGS"/>
    <property type="match status" value="1"/>
</dbReference>
<dbReference type="PRINTS" id="PR00098">
    <property type="entry name" value="CPSASE"/>
</dbReference>
<dbReference type="SMART" id="SM01096">
    <property type="entry name" value="CPSase_L_D3"/>
    <property type="match status" value="1"/>
</dbReference>
<dbReference type="SMART" id="SM00851">
    <property type="entry name" value="MGS"/>
    <property type="match status" value="1"/>
</dbReference>
<dbReference type="SUPFAM" id="SSF48108">
    <property type="entry name" value="Carbamoyl phosphate synthetase, large subunit connection domain"/>
    <property type="match status" value="1"/>
</dbReference>
<dbReference type="SUPFAM" id="SSF56059">
    <property type="entry name" value="Glutathione synthetase ATP-binding domain-like"/>
    <property type="match status" value="2"/>
</dbReference>
<dbReference type="SUPFAM" id="SSF52335">
    <property type="entry name" value="Methylglyoxal synthase-like"/>
    <property type="match status" value="1"/>
</dbReference>
<dbReference type="SUPFAM" id="SSF52440">
    <property type="entry name" value="PreATP-grasp domain"/>
    <property type="match status" value="2"/>
</dbReference>
<dbReference type="PROSITE" id="PS50975">
    <property type="entry name" value="ATP_GRASP"/>
    <property type="match status" value="2"/>
</dbReference>
<dbReference type="PROSITE" id="PS00866">
    <property type="entry name" value="CPSASE_1"/>
    <property type="match status" value="2"/>
</dbReference>
<dbReference type="PROSITE" id="PS00867">
    <property type="entry name" value="CPSASE_2"/>
    <property type="match status" value="2"/>
</dbReference>
<dbReference type="PROSITE" id="PS51855">
    <property type="entry name" value="MGS"/>
    <property type="match status" value="1"/>
</dbReference>